<feature type="chain" id="PRO_0000253643" description="UDP-3-O-acyl-N-acetylglucosamine deacetylase">
    <location>
        <begin position="1"/>
        <end position="306"/>
    </location>
</feature>
<feature type="active site" description="Proton donor" evidence="1">
    <location>
        <position position="264"/>
    </location>
</feature>
<feature type="binding site" evidence="1">
    <location>
        <position position="78"/>
    </location>
    <ligand>
        <name>Zn(2+)</name>
        <dbReference type="ChEBI" id="CHEBI:29105"/>
    </ligand>
</feature>
<feature type="binding site" evidence="1">
    <location>
        <position position="237"/>
    </location>
    <ligand>
        <name>Zn(2+)</name>
        <dbReference type="ChEBI" id="CHEBI:29105"/>
    </ligand>
</feature>
<feature type="binding site" evidence="1">
    <location>
        <position position="241"/>
    </location>
    <ligand>
        <name>Zn(2+)</name>
        <dbReference type="ChEBI" id="CHEBI:29105"/>
    </ligand>
</feature>
<protein>
    <recommendedName>
        <fullName evidence="1">UDP-3-O-acyl-N-acetylglucosamine deacetylase</fullName>
        <shortName evidence="1">UDP-3-O-acyl-GlcNAc deacetylase</shortName>
        <ecNumber evidence="1">3.5.1.108</ecNumber>
    </recommendedName>
    <alternativeName>
        <fullName evidence="1">UDP-3-O-[R-3-hydroxymyristoyl]-N-acetylglucosamine deacetylase</fullName>
    </alternativeName>
</protein>
<reference key="1">
    <citation type="journal article" date="2005" name="Arch. Microbiol.">
        <title>The genome sequence of an anaerobic aromatic-degrading denitrifying bacterium, strain EbN1.</title>
        <authorList>
            <person name="Rabus R."/>
            <person name="Kube M."/>
            <person name="Heider J."/>
            <person name="Beck A."/>
            <person name="Heitmann K."/>
            <person name="Widdel F."/>
            <person name="Reinhardt R."/>
        </authorList>
    </citation>
    <scope>NUCLEOTIDE SEQUENCE [LARGE SCALE GENOMIC DNA]</scope>
    <source>
        <strain>DSM 19018 / LMG 30748 / EbN1</strain>
    </source>
</reference>
<comment type="function">
    <text evidence="1">Catalyzes the hydrolysis of UDP-3-O-myristoyl-N-acetylglucosamine to form UDP-3-O-myristoylglucosamine and acetate, the committed step in lipid A biosynthesis.</text>
</comment>
<comment type="catalytic activity">
    <reaction evidence="1">
        <text>a UDP-3-O-[(3R)-3-hydroxyacyl]-N-acetyl-alpha-D-glucosamine + H2O = a UDP-3-O-[(3R)-3-hydroxyacyl]-alpha-D-glucosamine + acetate</text>
        <dbReference type="Rhea" id="RHEA:67816"/>
        <dbReference type="ChEBI" id="CHEBI:15377"/>
        <dbReference type="ChEBI" id="CHEBI:30089"/>
        <dbReference type="ChEBI" id="CHEBI:137740"/>
        <dbReference type="ChEBI" id="CHEBI:173225"/>
        <dbReference type="EC" id="3.5.1.108"/>
    </reaction>
</comment>
<comment type="cofactor">
    <cofactor evidence="1">
        <name>Zn(2+)</name>
        <dbReference type="ChEBI" id="CHEBI:29105"/>
    </cofactor>
</comment>
<comment type="pathway">
    <text evidence="1">Glycolipid biosynthesis; lipid IV(A) biosynthesis; lipid IV(A) from (3R)-3-hydroxytetradecanoyl-[acyl-carrier-protein] and UDP-N-acetyl-alpha-D-glucosamine: step 2/6.</text>
</comment>
<comment type="similarity">
    <text evidence="1">Belongs to the LpxC family.</text>
</comment>
<dbReference type="EC" id="3.5.1.108" evidence="1"/>
<dbReference type="EMBL" id="CR555306">
    <property type="protein sequence ID" value="CAI06909.1"/>
    <property type="molecule type" value="Genomic_DNA"/>
</dbReference>
<dbReference type="RefSeq" id="WP_011236637.1">
    <property type="nucleotide sequence ID" value="NC_006513.1"/>
</dbReference>
<dbReference type="SMR" id="Q5P702"/>
<dbReference type="STRING" id="76114.ebA1436"/>
<dbReference type="KEGG" id="eba:ebA1436"/>
<dbReference type="eggNOG" id="COG0774">
    <property type="taxonomic scope" value="Bacteria"/>
</dbReference>
<dbReference type="HOGENOM" id="CLU_046528_1_0_4"/>
<dbReference type="OrthoDB" id="9802746at2"/>
<dbReference type="UniPathway" id="UPA00359">
    <property type="reaction ID" value="UER00478"/>
</dbReference>
<dbReference type="Proteomes" id="UP000006552">
    <property type="component" value="Chromosome"/>
</dbReference>
<dbReference type="GO" id="GO:0016020">
    <property type="term" value="C:membrane"/>
    <property type="evidence" value="ECO:0007669"/>
    <property type="project" value="GOC"/>
</dbReference>
<dbReference type="GO" id="GO:0046872">
    <property type="term" value="F:metal ion binding"/>
    <property type="evidence" value="ECO:0007669"/>
    <property type="project" value="UniProtKB-KW"/>
</dbReference>
<dbReference type="GO" id="GO:0103117">
    <property type="term" value="F:UDP-3-O-acyl-N-acetylglucosamine deacetylase activity"/>
    <property type="evidence" value="ECO:0007669"/>
    <property type="project" value="UniProtKB-UniRule"/>
</dbReference>
<dbReference type="GO" id="GO:0009245">
    <property type="term" value="P:lipid A biosynthetic process"/>
    <property type="evidence" value="ECO:0007669"/>
    <property type="project" value="UniProtKB-UniRule"/>
</dbReference>
<dbReference type="Gene3D" id="3.30.230.20">
    <property type="entry name" value="lpxc deacetylase, domain 1"/>
    <property type="match status" value="1"/>
</dbReference>
<dbReference type="Gene3D" id="3.30.1700.10">
    <property type="entry name" value="lpxc deacetylase, domain 2"/>
    <property type="match status" value="1"/>
</dbReference>
<dbReference type="HAMAP" id="MF_00388">
    <property type="entry name" value="LpxC"/>
    <property type="match status" value="1"/>
</dbReference>
<dbReference type="InterPro" id="IPR020568">
    <property type="entry name" value="Ribosomal_Su5_D2-typ_SF"/>
</dbReference>
<dbReference type="InterPro" id="IPR004463">
    <property type="entry name" value="UDP-acyl_GlcNac_deAcase"/>
</dbReference>
<dbReference type="InterPro" id="IPR011334">
    <property type="entry name" value="UDP-acyl_GlcNac_deAcase_C"/>
</dbReference>
<dbReference type="InterPro" id="IPR015870">
    <property type="entry name" value="UDP-acyl_N-AcGlcN_deAcase_N"/>
</dbReference>
<dbReference type="NCBIfam" id="TIGR00325">
    <property type="entry name" value="lpxC"/>
    <property type="match status" value="1"/>
</dbReference>
<dbReference type="PANTHER" id="PTHR33694">
    <property type="entry name" value="UDP-3-O-ACYL-N-ACETYLGLUCOSAMINE DEACETYLASE 1, MITOCHONDRIAL-RELATED"/>
    <property type="match status" value="1"/>
</dbReference>
<dbReference type="PANTHER" id="PTHR33694:SF1">
    <property type="entry name" value="UDP-3-O-ACYL-N-ACETYLGLUCOSAMINE DEACETYLASE 1, MITOCHONDRIAL-RELATED"/>
    <property type="match status" value="1"/>
</dbReference>
<dbReference type="Pfam" id="PF03331">
    <property type="entry name" value="LpxC"/>
    <property type="match status" value="1"/>
</dbReference>
<dbReference type="SUPFAM" id="SSF54211">
    <property type="entry name" value="Ribosomal protein S5 domain 2-like"/>
    <property type="match status" value="2"/>
</dbReference>
<evidence type="ECO:0000255" key="1">
    <source>
        <dbReference type="HAMAP-Rule" id="MF_00388"/>
    </source>
</evidence>
<name>LPXC_AROAE</name>
<proteinExistence type="inferred from homology"/>
<accession>Q5P702</accession>
<gene>
    <name evidence="1" type="primary">lpxC</name>
    <name type="ordered locus">AZOSEA07860</name>
    <name type="ORF">ebA1436</name>
</gene>
<organism>
    <name type="scientific">Aromatoleum aromaticum (strain DSM 19018 / LMG 30748 / EbN1)</name>
    <name type="common">Azoarcus sp. (strain EbN1)</name>
    <dbReference type="NCBI Taxonomy" id="76114"/>
    <lineage>
        <taxon>Bacteria</taxon>
        <taxon>Pseudomonadati</taxon>
        <taxon>Pseudomonadota</taxon>
        <taxon>Betaproteobacteria</taxon>
        <taxon>Rhodocyclales</taxon>
        <taxon>Rhodocyclaceae</taxon>
        <taxon>Aromatoleum</taxon>
    </lineage>
</organism>
<sequence>MIRQRTLKSIVKATGVGLHGGRKVQLVLRPAAPDTGVVFHRVDLDPPCDLPADPYSVCDTRMCSGLERNGAKVGTVEHLMSAVAGLGVDNLHVDVDAPELPILDGSAGPFVFLLQSAGIEEQKAPKRFLRVKKAVEYREDDKWVRLEPHDGFRLTFSIVFNHPAIDKTSTSVTVDFAEHSYVRDVARARTFGFMQDVDSMRAHGLALGGSLDNAIVMDEYRVLNSDGLRYVDEFVKHKVLDAIGDLYLCGHPLLAAYSAHKAGHALNNQILRVLLEDRSAWEIATFEQPGMTPAAVSHQFELAPAT</sequence>
<keyword id="KW-0378">Hydrolase</keyword>
<keyword id="KW-0441">Lipid A biosynthesis</keyword>
<keyword id="KW-0444">Lipid biosynthesis</keyword>
<keyword id="KW-0443">Lipid metabolism</keyword>
<keyword id="KW-0479">Metal-binding</keyword>
<keyword id="KW-1185">Reference proteome</keyword>
<keyword id="KW-0862">Zinc</keyword>